<evidence type="ECO:0000255" key="1">
    <source>
        <dbReference type="PROSITE-ProRule" id="PRU01020"/>
    </source>
</evidence>
<evidence type="ECO:0000256" key="2">
    <source>
        <dbReference type="SAM" id="MobiDB-lite"/>
    </source>
</evidence>
<evidence type="ECO:0000269" key="3">
    <source>
    </source>
</evidence>
<evidence type="ECO:0000269" key="4">
    <source>
    </source>
</evidence>
<evidence type="ECO:0000303" key="5">
    <source>
    </source>
</evidence>
<evidence type="ECO:0000305" key="6"/>
<name>HASC_ASPFC</name>
<feature type="chain" id="PRO_0000461227" description="O-methyltransferase hasC">
    <location>
        <begin position="1"/>
        <end position="433"/>
    </location>
</feature>
<feature type="region of interest" description="Disordered" evidence="2">
    <location>
        <begin position="413"/>
        <end position="433"/>
    </location>
</feature>
<feature type="active site" description="Proton acceptor" evidence="1">
    <location>
        <position position="313"/>
    </location>
</feature>
<feature type="binding site" evidence="1">
    <location>
        <position position="265"/>
    </location>
    <ligand>
        <name>S-adenosyl-L-methionine</name>
        <dbReference type="ChEBI" id="CHEBI:59789"/>
    </ligand>
</feature>
<feature type="binding site" evidence="1">
    <location>
        <begin position="293"/>
        <end position="295"/>
    </location>
    <ligand>
        <name>S-adenosyl-L-methionine</name>
        <dbReference type="ChEBI" id="CHEBI:59789"/>
    </ligand>
</feature>
<gene>
    <name evidence="5" type="primary">hasC</name>
    <name type="ORF">AFUB_036280</name>
</gene>
<dbReference type="EC" id="2.1.1.-" evidence="1"/>
<dbReference type="EMBL" id="DS499596">
    <property type="protein sequence ID" value="EDP52462.1"/>
    <property type="molecule type" value="Genomic_DNA"/>
</dbReference>
<dbReference type="SMR" id="B0XWK9"/>
<dbReference type="EnsemblFungi" id="EDP52462">
    <property type="protein sequence ID" value="EDP52462"/>
    <property type="gene ID" value="AFUB_036280"/>
</dbReference>
<dbReference type="VEuPathDB" id="FungiDB:AFUB_036280"/>
<dbReference type="HOGENOM" id="CLU_005533_12_2_1"/>
<dbReference type="OrthoDB" id="56630at5052"/>
<dbReference type="PhylomeDB" id="B0XWK9"/>
<dbReference type="Proteomes" id="UP000001699">
    <property type="component" value="Unassembled WGS sequence"/>
</dbReference>
<dbReference type="GO" id="GO:0008171">
    <property type="term" value="F:O-methyltransferase activity"/>
    <property type="evidence" value="ECO:0007669"/>
    <property type="project" value="InterPro"/>
</dbReference>
<dbReference type="GO" id="GO:0046983">
    <property type="term" value="F:protein dimerization activity"/>
    <property type="evidence" value="ECO:0007669"/>
    <property type="project" value="InterPro"/>
</dbReference>
<dbReference type="GO" id="GO:0032259">
    <property type="term" value="P:methylation"/>
    <property type="evidence" value="ECO:0007669"/>
    <property type="project" value="UniProtKB-KW"/>
</dbReference>
<dbReference type="GO" id="GO:0044550">
    <property type="term" value="P:secondary metabolite biosynthetic process"/>
    <property type="evidence" value="ECO:0007669"/>
    <property type="project" value="UniProtKB-ARBA"/>
</dbReference>
<dbReference type="Gene3D" id="3.40.50.150">
    <property type="entry name" value="Vaccinia Virus protein VP39"/>
    <property type="match status" value="1"/>
</dbReference>
<dbReference type="Gene3D" id="1.10.10.10">
    <property type="entry name" value="Winged helix-like DNA-binding domain superfamily/Winged helix DNA-binding domain"/>
    <property type="match status" value="1"/>
</dbReference>
<dbReference type="InterPro" id="IPR016461">
    <property type="entry name" value="COMT-like"/>
</dbReference>
<dbReference type="InterPro" id="IPR001077">
    <property type="entry name" value="O_MeTrfase_dom"/>
</dbReference>
<dbReference type="InterPro" id="IPR012967">
    <property type="entry name" value="Plant_O-MeTrfase_dimerisation"/>
</dbReference>
<dbReference type="InterPro" id="IPR029063">
    <property type="entry name" value="SAM-dependent_MTases_sf"/>
</dbReference>
<dbReference type="InterPro" id="IPR036388">
    <property type="entry name" value="WH-like_DNA-bd_sf"/>
</dbReference>
<dbReference type="InterPro" id="IPR036390">
    <property type="entry name" value="WH_DNA-bd_sf"/>
</dbReference>
<dbReference type="PANTHER" id="PTHR43712:SF2">
    <property type="entry name" value="O-METHYLTRANSFERASE CICE"/>
    <property type="match status" value="1"/>
</dbReference>
<dbReference type="PANTHER" id="PTHR43712">
    <property type="entry name" value="PUTATIVE (AFU_ORTHOLOGUE AFUA_4G14580)-RELATED"/>
    <property type="match status" value="1"/>
</dbReference>
<dbReference type="Pfam" id="PF08100">
    <property type="entry name" value="Dimerisation"/>
    <property type="match status" value="1"/>
</dbReference>
<dbReference type="Pfam" id="PF00891">
    <property type="entry name" value="Methyltransf_2"/>
    <property type="match status" value="1"/>
</dbReference>
<dbReference type="SUPFAM" id="SSF53335">
    <property type="entry name" value="S-adenosyl-L-methionine-dependent methyltransferases"/>
    <property type="match status" value="1"/>
</dbReference>
<dbReference type="SUPFAM" id="SSF46785">
    <property type="entry name" value="Winged helix' DNA-binding domain"/>
    <property type="match status" value="1"/>
</dbReference>
<dbReference type="PROSITE" id="PS51683">
    <property type="entry name" value="SAM_OMT_II"/>
    <property type="match status" value="1"/>
</dbReference>
<organism>
    <name type="scientific">Aspergillus fumigatus (strain CBS 144.89 / FGSC A1163 / CEA10)</name>
    <name type="common">Neosartorya fumigata</name>
    <dbReference type="NCBI Taxonomy" id="451804"/>
    <lineage>
        <taxon>Eukaryota</taxon>
        <taxon>Fungi</taxon>
        <taxon>Dikarya</taxon>
        <taxon>Ascomycota</taxon>
        <taxon>Pezizomycotina</taxon>
        <taxon>Eurotiomycetes</taxon>
        <taxon>Eurotiomycetidae</taxon>
        <taxon>Eurotiales</taxon>
        <taxon>Aspergillaceae</taxon>
        <taxon>Aspergillus</taxon>
        <taxon>Aspergillus subgen. Fumigati</taxon>
    </lineage>
</organism>
<comment type="function">
    <text evidence="3">O-methyltransferase; part of the gene cluster that mediates the biosynthesis of hexadehydro-astechrome (HAS), a tryptophan-derived iron(III)-complex that acts as a virulence factor in infected mice (PubMed:23360537). Within the pathway, hasC, with the cytochrome P450 monooxygenase hasH and the FAD-linked oxidoreductase hasG, convert the hasE-prenylated Trp-Ala-dipeptide into an O-methylated diketopiperazine that is then released from the hasD NRPS (PubMed:23360537). The HAS biosynthesis begins with the synthesis of a tethered Trp-Ala dipeptide by the NRPS hasD. The 7-dimethylallyltryptophan synthase hasE then catalyzes the prenylation of the hasD-tethered tryptophan or the resulting tethered Trp-Ala dipeptide at the C-7 position of the indole moiety. HAS biosynthesis continues via tethered intermediates with the succesive actions of the cytochrome P450 monooxygenase hasH, the O-methyltransferase hasC, and the FAD-linked oxidoreductase hasG. The resulting O-methylated diketopiperazine is then released from hasD. Finally, three O-methylated diketopiperazine molecules assemble in a trimeric complex with Fe(III) to produce hexadehydro-astechrome (PubMed:23360537).</text>
</comment>
<comment type="pathway">
    <text evidence="3">Secondary metabolite biosynthesis.</text>
</comment>
<comment type="induction">
    <text evidence="4">The expression of the hexadehydro-astechrome cluster is induced by glucose.</text>
</comment>
<comment type="disruption phenotype">
    <text evidence="3">Abolishes the production of all diketopiperazine derivatives but leads to the accummulation of large quantities of L-7-dimethylallyltryptophan, as well as the trans- and cis-isomers of L-7-(3-methylbutadienyl)tryptophan.</text>
</comment>
<comment type="similarity">
    <text evidence="6">Belongs to the class I-like SAM-binding methyltransferase superfamily. Cation-independent O-methyltransferase family. COMT subfamily.</text>
</comment>
<protein>
    <recommendedName>
        <fullName evidence="5">O-methyltransferase hasC</fullName>
        <ecNumber evidence="1">2.1.1.-</ecNumber>
    </recommendedName>
    <alternativeName>
        <fullName evidence="5">Hexadehydro-astechrome biosynthesis cluster protein C</fullName>
    </alternativeName>
</protein>
<accession>B0XWK9</accession>
<keyword id="KW-0489">Methyltransferase</keyword>
<keyword id="KW-0949">S-adenosyl-L-methionine</keyword>
<keyword id="KW-0808">Transferase</keyword>
<keyword id="KW-0843">Virulence</keyword>
<sequence>MENELEHLNWNIKHALLQLEGPLAQELDSCLEVSPGALSPSNSVYQKILDTVQVLDKLLVTLTPPHMTLVDGVFAFTNSKVLLCASEYALADHVQKLQPCSISQLAEATGLHEQGLFQIVRYLREMGYFSQDPKTGLLSNNRLSNLLRKDHWATWINWVDFFPREYYDLLSRLPDQLRSDQPKTATELFYNTDKPIYQYLAETGRAAGFHKVTGTGSVVEAPGLLADYPWEEVKSETVVDVGAGVGDFIRSYLEKFPDATAAAFELPSTAEILKQRFPDDDPLTSRIVSITGGDFFQDPIPESSVYLLRWILHNWGDEDCIKLLRRIRETMVIKPGVSRVLIIESVLFDGRLGRGARYADIRMLARCRNKERTLGEYRKLAEEAGWRLNRVVSPRGCLTQIMELRPVGACTGSPRANGNGNSAGGLEWESELM</sequence>
<reference key="1">
    <citation type="journal article" date="2008" name="PLoS Genet.">
        <title>Genomic islands in the pathogenic filamentous fungus Aspergillus fumigatus.</title>
        <authorList>
            <person name="Fedorova N.D."/>
            <person name="Khaldi N."/>
            <person name="Joardar V.S."/>
            <person name="Maiti R."/>
            <person name="Amedeo P."/>
            <person name="Anderson M.J."/>
            <person name="Crabtree J."/>
            <person name="Silva J.C."/>
            <person name="Badger J.H."/>
            <person name="Albarraq A."/>
            <person name="Angiuoli S."/>
            <person name="Bussey H."/>
            <person name="Bowyer P."/>
            <person name="Cotty P.J."/>
            <person name="Dyer P.S."/>
            <person name="Egan A."/>
            <person name="Galens K."/>
            <person name="Fraser-Liggett C.M."/>
            <person name="Haas B.J."/>
            <person name="Inman J.M."/>
            <person name="Kent R."/>
            <person name="Lemieux S."/>
            <person name="Malavazi I."/>
            <person name="Orvis J."/>
            <person name="Roemer T."/>
            <person name="Ronning C.M."/>
            <person name="Sundaram J.P."/>
            <person name="Sutton G."/>
            <person name="Turner G."/>
            <person name="Venter J.C."/>
            <person name="White O.R."/>
            <person name="Whitty B.R."/>
            <person name="Youngman P."/>
            <person name="Wolfe K.H."/>
            <person name="Goldman G.H."/>
            <person name="Wortman J.R."/>
            <person name="Jiang B."/>
            <person name="Denning D.W."/>
            <person name="Nierman W.C."/>
        </authorList>
    </citation>
    <scope>NUCLEOTIDE SEQUENCE [LARGE SCALE GENOMIC DNA]</scope>
    <source>
        <strain>CBS 144.89 / FGSC A1163 / CEA10</strain>
    </source>
</reference>
<reference key="2">
    <citation type="journal article" date="2013" name="J. Am. Chem. Soc.">
        <title>A nonribosomal peptide synthetase-derived iron(III) complex from the pathogenic fungus Aspergillus fumigatus.</title>
        <authorList>
            <person name="Yin W.B."/>
            <person name="Baccile J.A."/>
            <person name="Bok J.W."/>
            <person name="Chen Y."/>
            <person name="Keller N.P."/>
            <person name="Schroeder F.C."/>
        </authorList>
    </citation>
    <scope>FUNCTION</scope>
    <scope>DISRUPTION PHENOTYPE</scope>
    <scope>PATHWAY</scope>
</reference>
<reference key="3">
    <citation type="journal article" date="2022" name="J. Fungi">
        <title>Stress responses elicited by glucose withdrawal in Aspergillus fumigatus.</title>
        <authorList>
            <person name="Emri T."/>
            <person name="Antal K."/>
            <person name="Gila B."/>
            <person name="Jonas A.P."/>
            <person name="Pocsi I."/>
        </authorList>
    </citation>
    <scope>INDUCTION</scope>
</reference>
<proteinExistence type="evidence at transcript level"/>